<feature type="chain" id="PRO_0000290995" description="Thiamine kinase">
    <location>
        <begin position="1"/>
        <end position="274"/>
    </location>
</feature>
<organism>
    <name type="scientific">Escherichia coli (strain UTI89 / UPEC)</name>
    <dbReference type="NCBI Taxonomy" id="364106"/>
    <lineage>
        <taxon>Bacteria</taxon>
        <taxon>Pseudomonadati</taxon>
        <taxon>Pseudomonadota</taxon>
        <taxon>Gammaproteobacteria</taxon>
        <taxon>Enterobacterales</taxon>
        <taxon>Enterobacteriaceae</taxon>
        <taxon>Escherichia</taxon>
    </lineage>
</organism>
<name>THIK_ECOUT</name>
<accession>Q1RD48</accession>
<comment type="function">
    <text evidence="1">Catalyzes the ATP-dependent phosphorylation of thiamine to thiamine phosphate. Is involved in thiamine salvage.</text>
</comment>
<comment type="catalytic activity">
    <reaction evidence="1">
        <text>thiamine + ATP = thiamine phosphate + ADP + H(+)</text>
        <dbReference type="Rhea" id="RHEA:12012"/>
        <dbReference type="ChEBI" id="CHEBI:15378"/>
        <dbReference type="ChEBI" id="CHEBI:18385"/>
        <dbReference type="ChEBI" id="CHEBI:30616"/>
        <dbReference type="ChEBI" id="CHEBI:37575"/>
        <dbReference type="ChEBI" id="CHEBI:456216"/>
        <dbReference type="EC" id="2.7.1.89"/>
    </reaction>
    <physiologicalReaction direction="left-to-right" evidence="1">
        <dbReference type="Rhea" id="RHEA:12013"/>
    </physiologicalReaction>
</comment>
<comment type="pathway">
    <text evidence="1">Cofactor biosynthesis; thiamine diphosphate biosynthesis; thiamine phosphate from thiamine: step 1/1.</text>
</comment>
<comment type="similarity">
    <text evidence="1">Belongs to the thiamine kinase family.</text>
</comment>
<reference key="1">
    <citation type="journal article" date="2006" name="Proc. Natl. Acad. Sci. U.S.A.">
        <title>Identification of genes subject to positive selection in uropathogenic strains of Escherichia coli: a comparative genomics approach.</title>
        <authorList>
            <person name="Chen S.L."/>
            <person name="Hung C.-S."/>
            <person name="Xu J."/>
            <person name="Reigstad C.S."/>
            <person name="Magrini V."/>
            <person name="Sabo A."/>
            <person name="Blasiar D."/>
            <person name="Bieri T."/>
            <person name="Meyer R.R."/>
            <person name="Ozersky P."/>
            <person name="Armstrong J.R."/>
            <person name="Fulton R.S."/>
            <person name="Latreille J.P."/>
            <person name="Spieth J."/>
            <person name="Hooton T.M."/>
            <person name="Mardis E.R."/>
            <person name="Hultgren S.J."/>
            <person name="Gordon J.I."/>
        </authorList>
    </citation>
    <scope>NUCLEOTIDE SEQUENCE [LARGE SCALE GENOMIC DNA]</scope>
    <source>
        <strain>UTI89 / UPEC</strain>
    </source>
</reference>
<evidence type="ECO:0000255" key="1">
    <source>
        <dbReference type="HAMAP-Rule" id="MF_01604"/>
    </source>
</evidence>
<dbReference type="EC" id="2.7.1.89" evidence="1"/>
<dbReference type="EMBL" id="CP000243">
    <property type="protein sequence ID" value="ABE06716.1"/>
    <property type="molecule type" value="Genomic_DNA"/>
</dbReference>
<dbReference type="RefSeq" id="WP_001116600.1">
    <property type="nucleotide sequence ID" value="NZ_CP064825.1"/>
</dbReference>
<dbReference type="SMR" id="Q1RD48"/>
<dbReference type="KEGG" id="eci:UTI89_C1234"/>
<dbReference type="HOGENOM" id="CLU_055115_2_1_6"/>
<dbReference type="UniPathway" id="UPA00060">
    <property type="reaction ID" value="UER00596"/>
</dbReference>
<dbReference type="Proteomes" id="UP000001952">
    <property type="component" value="Chromosome"/>
</dbReference>
<dbReference type="GO" id="GO:0005524">
    <property type="term" value="F:ATP binding"/>
    <property type="evidence" value="ECO:0007669"/>
    <property type="project" value="UniProtKB-KW"/>
</dbReference>
<dbReference type="GO" id="GO:0019165">
    <property type="term" value="F:thiamine kinase activity"/>
    <property type="evidence" value="ECO:0007669"/>
    <property type="project" value="UniProtKB-UniRule"/>
</dbReference>
<dbReference type="GO" id="GO:0009229">
    <property type="term" value="P:thiamine diphosphate biosynthetic process"/>
    <property type="evidence" value="ECO:0007669"/>
    <property type="project" value="UniProtKB-UniRule"/>
</dbReference>
<dbReference type="GO" id="GO:0006772">
    <property type="term" value="P:thiamine metabolic process"/>
    <property type="evidence" value="ECO:0007669"/>
    <property type="project" value="InterPro"/>
</dbReference>
<dbReference type="FunFam" id="3.90.1200.10:FF:000004">
    <property type="entry name" value="Thiamine kinase"/>
    <property type="match status" value="1"/>
</dbReference>
<dbReference type="Gene3D" id="3.90.1200.10">
    <property type="match status" value="1"/>
</dbReference>
<dbReference type="HAMAP" id="MF_01604">
    <property type="entry name" value="Thiamine_kinase"/>
    <property type="match status" value="1"/>
</dbReference>
<dbReference type="InterPro" id="IPR002575">
    <property type="entry name" value="Aminoglycoside_PTrfase"/>
</dbReference>
<dbReference type="InterPro" id="IPR011009">
    <property type="entry name" value="Kinase-like_dom_sf"/>
</dbReference>
<dbReference type="InterPro" id="IPR014093">
    <property type="entry name" value="Thiamine_kinase"/>
</dbReference>
<dbReference type="NCBIfam" id="NF007620">
    <property type="entry name" value="PRK10271.1"/>
    <property type="match status" value="1"/>
</dbReference>
<dbReference type="NCBIfam" id="TIGR02721">
    <property type="entry name" value="ycfN_thiK"/>
    <property type="match status" value="1"/>
</dbReference>
<dbReference type="Pfam" id="PF01636">
    <property type="entry name" value="APH"/>
    <property type="match status" value="1"/>
</dbReference>
<dbReference type="SUPFAM" id="SSF56112">
    <property type="entry name" value="Protein kinase-like (PK-like)"/>
    <property type="match status" value="1"/>
</dbReference>
<gene>
    <name evidence="1" type="primary">thiK</name>
    <name type="ordered locus">UTI89_C1234</name>
</gene>
<keyword id="KW-0067">ATP-binding</keyword>
<keyword id="KW-0418">Kinase</keyword>
<keyword id="KW-0547">Nucleotide-binding</keyword>
<keyword id="KW-0808">Transferase</keyword>
<proteinExistence type="inferred from homology"/>
<protein>
    <recommendedName>
        <fullName evidence="1">Thiamine kinase</fullName>
        <ecNumber evidence="1">2.7.1.89</ecNumber>
    </recommendedName>
</protein>
<sequence>MPFRSNNPLTRDELLSRFFPQFHPVTTFNSGLSGGSFLIEHQGQRFVVRQPHDPDAPQSAFLRQYRALSQLPACIAPKPHLYLRDWMVVDYLPGEVKTYLPDTNELAGLLYYLHQQPRFGWRITLLPLLELYWQQSDPARRTVGWLRMLKRLRKAREPRLLRLSPLHMDVHAGNLVHSASGLKLIDWEYAGDGDIALELAAVWVENIDQHRQLVNDYATRAKIYPAQLWRQVRRWFPWLLMLKAGWFEYRWRQTGDQQFIRLADDTWRQLLIKQ</sequence>